<feature type="chain" id="PRO_1000101239" description="Glycine--tRNA ligase alpha subunit">
    <location>
        <begin position="1"/>
        <end position="305"/>
    </location>
</feature>
<protein>
    <recommendedName>
        <fullName evidence="1">Glycine--tRNA ligase alpha subunit</fullName>
        <ecNumber evidence="1">6.1.1.14</ecNumber>
    </recommendedName>
    <alternativeName>
        <fullName evidence="1">Glycyl-tRNA synthetase alpha subunit</fullName>
        <shortName evidence="1">GlyRS</shortName>
    </alternativeName>
</protein>
<name>SYGA_STRPZ</name>
<accession>B5XMN0</accession>
<comment type="catalytic activity">
    <reaction evidence="1">
        <text>tRNA(Gly) + glycine + ATP = glycyl-tRNA(Gly) + AMP + diphosphate</text>
        <dbReference type="Rhea" id="RHEA:16013"/>
        <dbReference type="Rhea" id="RHEA-COMP:9664"/>
        <dbReference type="Rhea" id="RHEA-COMP:9683"/>
        <dbReference type="ChEBI" id="CHEBI:30616"/>
        <dbReference type="ChEBI" id="CHEBI:33019"/>
        <dbReference type="ChEBI" id="CHEBI:57305"/>
        <dbReference type="ChEBI" id="CHEBI:78442"/>
        <dbReference type="ChEBI" id="CHEBI:78522"/>
        <dbReference type="ChEBI" id="CHEBI:456215"/>
        <dbReference type="EC" id="6.1.1.14"/>
    </reaction>
</comment>
<comment type="subunit">
    <text evidence="1">Tetramer of two alpha and two beta subunits.</text>
</comment>
<comment type="subcellular location">
    <subcellularLocation>
        <location evidence="1">Cytoplasm</location>
    </subcellularLocation>
</comment>
<comment type="similarity">
    <text evidence="1">Belongs to the class-II aminoacyl-tRNA synthetase family.</text>
</comment>
<dbReference type="EC" id="6.1.1.14" evidence="1"/>
<dbReference type="EMBL" id="CP000829">
    <property type="protein sequence ID" value="ACI61592.1"/>
    <property type="molecule type" value="Genomic_DNA"/>
</dbReference>
<dbReference type="SMR" id="B5XMN0"/>
<dbReference type="KEGG" id="soz:Spy49_1311c"/>
<dbReference type="HOGENOM" id="CLU_057066_1_0_9"/>
<dbReference type="Proteomes" id="UP000001039">
    <property type="component" value="Chromosome"/>
</dbReference>
<dbReference type="GO" id="GO:0005829">
    <property type="term" value="C:cytosol"/>
    <property type="evidence" value="ECO:0007669"/>
    <property type="project" value="TreeGrafter"/>
</dbReference>
<dbReference type="GO" id="GO:0005524">
    <property type="term" value="F:ATP binding"/>
    <property type="evidence" value="ECO:0007669"/>
    <property type="project" value="UniProtKB-UniRule"/>
</dbReference>
<dbReference type="GO" id="GO:0140096">
    <property type="term" value="F:catalytic activity, acting on a protein"/>
    <property type="evidence" value="ECO:0007669"/>
    <property type="project" value="UniProtKB-ARBA"/>
</dbReference>
<dbReference type="GO" id="GO:0004820">
    <property type="term" value="F:glycine-tRNA ligase activity"/>
    <property type="evidence" value="ECO:0007669"/>
    <property type="project" value="UniProtKB-UniRule"/>
</dbReference>
<dbReference type="GO" id="GO:0016740">
    <property type="term" value="F:transferase activity"/>
    <property type="evidence" value="ECO:0007669"/>
    <property type="project" value="UniProtKB-ARBA"/>
</dbReference>
<dbReference type="GO" id="GO:0006426">
    <property type="term" value="P:glycyl-tRNA aminoacylation"/>
    <property type="evidence" value="ECO:0007669"/>
    <property type="project" value="UniProtKB-UniRule"/>
</dbReference>
<dbReference type="CDD" id="cd00733">
    <property type="entry name" value="GlyRS_alpha_core"/>
    <property type="match status" value="1"/>
</dbReference>
<dbReference type="FunFam" id="3.30.930.10:FF:000006">
    <property type="entry name" value="Glycine--tRNA ligase alpha subunit"/>
    <property type="match status" value="1"/>
</dbReference>
<dbReference type="Gene3D" id="3.30.930.10">
    <property type="entry name" value="Bira Bifunctional Protein, Domain 2"/>
    <property type="match status" value="1"/>
</dbReference>
<dbReference type="Gene3D" id="1.20.58.180">
    <property type="entry name" value="Class II aaRS and biotin synthetases, domain 2"/>
    <property type="match status" value="1"/>
</dbReference>
<dbReference type="HAMAP" id="MF_00254">
    <property type="entry name" value="Gly_tRNA_synth_alpha"/>
    <property type="match status" value="1"/>
</dbReference>
<dbReference type="InterPro" id="IPR045864">
    <property type="entry name" value="aa-tRNA-synth_II/BPL/LPL"/>
</dbReference>
<dbReference type="InterPro" id="IPR006194">
    <property type="entry name" value="Gly-tRNA-synth_heterodimer"/>
</dbReference>
<dbReference type="InterPro" id="IPR002310">
    <property type="entry name" value="Gly-tRNA_ligase_asu"/>
</dbReference>
<dbReference type="NCBIfam" id="TIGR00388">
    <property type="entry name" value="glyQ"/>
    <property type="match status" value="1"/>
</dbReference>
<dbReference type="NCBIfam" id="NF006827">
    <property type="entry name" value="PRK09348.1"/>
    <property type="match status" value="1"/>
</dbReference>
<dbReference type="PANTHER" id="PTHR30075:SF2">
    <property type="entry name" value="GLYCINE--TRNA LIGASE, CHLOROPLASTIC_MITOCHONDRIAL 2"/>
    <property type="match status" value="1"/>
</dbReference>
<dbReference type="PANTHER" id="PTHR30075">
    <property type="entry name" value="GLYCYL-TRNA SYNTHETASE"/>
    <property type="match status" value="1"/>
</dbReference>
<dbReference type="Pfam" id="PF02091">
    <property type="entry name" value="tRNA-synt_2e"/>
    <property type="match status" value="1"/>
</dbReference>
<dbReference type="PRINTS" id="PR01044">
    <property type="entry name" value="TRNASYNTHGA"/>
</dbReference>
<dbReference type="SUPFAM" id="SSF55681">
    <property type="entry name" value="Class II aaRS and biotin synthetases"/>
    <property type="match status" value="1"/>
</dbReference>
<dbReference type="PROSITE" id="PS50861">
    <property type="entry name" value="AA_TRNA_LIGASE_II_GLYAB"/>
    <property type="match status" value="1"/>
</dbReference>
<reference key="1">
    <citation type="journal article" date="2008" name="J. Bacteriol.">
        <title>Genome sequence of a nephritogenic and highly transformable M49 strain of Streptococcus pyogenes.</title>
        <authorList>
            <person name="McShan W.M."/>
            <person name="Ferretti J.J."/>
            <person name="Karasawa T."/>
            <person name="Suvorov A.N."/>
            <person name="Lin S."/>
            <person name="Qin B."/>
            <person name="Jia H."/>
            <person name="Kenton S."/>
            <person name="Najar F."/>
            <person name="Wu H."/>
            <person name="Scott J."/>
            <person name="Roe B.A."/>
            <person name="Savic D.J."/>
        </authorList>
    </citation>
    <scope>NUCLEOTIDE SEQUENCE [LARGE SCALE GENOMIC DNA]</scope>
    <source>
        <strain>NZ131</strain>
    </source>
</reference>
<sequence length="305" mass="34793">MSKKLTFQEIILTLQQYWNDQGCMLMQAYDNEKGAGTMSPYTFLRAIGPEPWNAAYVEPSRRPADGRYGENPNRLYQHHQFQVVMKPSPSNIQELYLASLEKLGINPLEHDIRFVEDNWENPSTGSAGLGWEVWLDGMEITQFTYFQQVGGLATSPVTAEVTYGLERLASYIQEVDSVYDIEWAPGVKYGEIFLQPEYEHSKYSFEMSDQDMLLENFEKFEKEASRALEEGLVHPAYDYVLKCSHTFNLLDARGAVSVTERAGYIARIRNLARVVAKTFVAERKKLGFPLLDEATRAILLAEDGE</sequence>
<gene>
    <name evidence="1" type="primary">glyQ</name>
    <name type="ordered locus">Spy49_1311c</name>
</gene>
<evidence type="ECO:0000255" key="1">
    <source>
        <dbReference type="HAMAP-Rule" id="MF_00254"/>
    </source>
</evidence>
<proteinExistence type="inferred from homology"/>
<keyword id="KW-0030">Aminoacyl-tRNA synthetase</keyword>
<keyword id="KW-0067">ATP-binding</keyword>
<keyword id="KW-0963">Cytoplasm</keyword>
<keyword id="KW-0436">Ligase</keyword>
<keyword id="KW-0547">Nucleotide-binding</keyword>
<keyword id="KW-0648">Protein biosynthesis</keyword>
<organism>
    <name type="scientific">Streptococcus pyogenes serotype M49 (strain NZ131)</name>
    <dbReference type="NCBI Taxonomy" id="471876"/>
    <lineage>
        <taxon>Bacteria</taxon>
        <taxon>Bacillati</taxon>
        <taxon>Bacillota</taxon>
        <taxon>Bacilli</taxon>
        <taxon>Lactobacillales</taxon>
        <taxon>Streptococcaceae</taxon>
        <taxon>Streptococcus</taxon>
    </lineage>
</organism>